<sequence length="251" mass="28073">MVDKSQETTHFGFQTVAKEQKADMVAHVFHSVASKYDVMNDLMSFGIHRLWKRFTIDCSGVRRGQTVLDLAGGTGDLTAKFSRLVGETGKVVLADINESMLKMGREKLRNIGVIGNVEYVQANAEALPFPDNTFDCITISFGLRNVTDKDKALRSMYRVLKPGGRLLVLEFSKPIIEPLSKAYDAYSFHVLPRIGSLVANDADSYRYLAESIRMHPDQDTLKAMMQDAGFESVDYYNLTAGVVALHRGYKF</sequence>
<protein>
    <recommendedName>
        <fullName evidence="1">Ubiquinone/menaquinone biosynthesis C-methyltransferase UbiE</fullName>
        <ecNumber evidence="1">2.1.1.163</ecNumber>
        <ecNumber evidence="1">2.1.1.201</ecNumber>
    </recommendedName>
    <alternativeName>
        <fullName evidence="1">2-methoxy-6-polyprenyl-1,4-benzoquinol methylase</fullName>
    </alternativeName>
    <alternativeName>
        <fullName evidence="1">Demethylmenaquinone methyltransferase</fullName>
    </alternativeName>
</protein>
<dbReference type="EC" id="2.1.1.163" evidence="1"/>
<dbReference type="EC" id="2.1.1.201" evidence="1"/>
<dbReference type="EMBL" id="CP000034">
    <property type="protein sequence ID" value="ABB63844.1"/>
    <property type="molecule type" value="Genomic_DNA"/>
</dbReference>
<dbReference type="RefSeq" id="WP_000227958.1">
    <property type="nucleotide sequence ID" value="NC_007606.1"/>
</dbReference>
<dbReference type="RefSeq" id="YP_405335.1">
    <property type="nucleotide sequence ID" value="NC_007606.1"/>
</dbReference>
<dbReference type="SMR" id="Q32A11"/>
<dbReference type="STRING" id="300267.SDY_3910"/>
<dbReference type="EnsemblBacteria" id="ABB63844">
    <property type="protein sequence ID" value="ABB63844"/>
    <property type="gene ID" value="SDY_3910"/>
</dbReference>
<dbReference type="GeneID" id="93778102"/>
<dbReference type="KEGG" id="sdy:SDY_3910"/>
<dbReference type="PATRIC" id="fig|300267.13.peg.4618"/>
<dbReference type="HOGENOM" id="CLU_037990_0_0_6"/>
<dbReference type="UniPathway" id="UPA00079">
    <property type="reaction ID" value="UER00169"/>
</dbReference>
<dbReference type="UniPathway" id="UPA00232"/>
<dbReference type="Proteomes" id="UP000002716">
    <property type="component" value="Chromosome"/>
</dbReference>
<dbReference type="GO" id="GO:0008425">
    <property type="term" value="F:2-methoxy-6-polyprenyl-1,4-benzoquinol methyltransferase activity"/>
    <property type="evidence" value="ECO:0007669"/>
    <property type="project" value="UniProtKB-UniRule"/>
</dbReference>
<dbReference type="GO" id="GO:0043770">
    <property type="term" value="F:demethylmenaquinone methyltransferase activity"/>
    <property type="evidence" value="ECO:0007669"/>
    <property type="project" value="UniProtKB-UniRule"/>
</dbReference>
<dbReference type="GO" id="GO:0009060">
    <property type="term" value="P:aerobic respiration"/>
    <property type="evidence" value="ECO:0007669"/>
    <property type="project" value="UniProtKB-UniRule"/>
</dbReference>
<dbReference type="GO" id="GO:0009234">
    <property type="term" value="P:menaquinone biosynthetic process"/>
    <property type="evidence" value="ECO:0007669"/>
    <property type="project" value="UniProtKB-UniRule"/>
</dbReference>
<dbReference type="GO" id="GO:0032259">
    <property type="term" value="P:methylation"/>
    <property type="evidence" value="ECO:0007669"/>
    <property type="project" value="UniProtKB-KW"/>
</dbReference>
<dbReference type="CDD" id="cd02440">
    <property type="entry name" value="AdoMet_MTases"/>
    <property type="match status" value="1"/>
</dbReference>
<dbReference type="FunFam" id="3.40.50.150:FF:000014">
    <property type="entry name" value="Ubiquinone/menaquinone biosynthesis C-methyltransferase UbiE"/>
    <property type="match status" value="1"/>
</dbReference>
<dbReference type="Gene3D" id="3.40.50.150">
    <property type="entry name" value="Vaccinia Virus protein VP39"/>
    <property type="match status" value="1"/>
</dbReference>
<dbReference type="HAMAP" id="MF_01813">
    <property type="entry name" value="MenG_UbiE_methyltr"/>
    <property type="match status" value="1"/>
</dbReference>
<dbReference type="InterPro" id="IPR029063">
    <property type="entry name" value="SAM-dependent_MTases_sf"/>
</dbReference>
<dbReference type="InterPro" id="IPR004033">
    <property type="entry name" value="UbiE/COQ5_MeTrFase"/>
</dbReference>
<dbReference type="InterPro" id="IPR023576">
    <property type="entry name" value="UbiE/COQ5_MeTrFase_CS"/>
</dbReference>
<dbReference type="NCBIfam" id="TIGR01934">
    <property type="entry name" value="MenG_MenH_UbiE"/>
    <property type="match status" value="1"/>
</dbReference>
<dbReference type="NCBIfam" id="NF001240">
    <property type="entry name" value="PRK00216.1-1"/>
    <property type="match status" value="1"/>
</dbReference>
<dbReference type="NCBIfam" id="NF001242">
    <property type="entry name" value="PRK00216.1-3"/>
    <property type="match status" value="1"/>
</dbReference>
<dbReference type="NCBIfam" id="NF001244">
    <property type="entry name" value="PRK00216.1-5"/>
    <property type="match status" value="1"/>
</dbReference>
<dbReference type="PANTHER" id="PTHR43591:SF24">
    <property type="entry name" value="2-METHOXY-6-POLYPRENYL-1,4-BENZOQUINOL METHYLASE, MITOCHONDRIAL"/>
    <property type="match status" value="1"/>
</dbReference>
<dbReference type="PANTHER" id="PTHR43591">
    <property type="entry name" value="METHYLTRANSFERASE"/>
    <property type="match status" value="1"/>
</dbReference>
<dbReference type="Pfam" id="PF01209">
    <property type="entry name" value="Ubie_methyltran"/>
    <property type="match status" value="1"/>
</dbReference>
<dbReference type="SUPFAM" id="SSF53335">
    <property type="entry name" value="S-adenosyl-L-methionine-dependent methyltransferases"/>
    <property type="match status" value="1"/>
</dbReference>
<dbReference type="PROSITE" id="PS51608">
    <property type="entry name" value="SAM_MT_UBIE"/>
    <property type="match status" value="1"/>
</dbReference>
<dbReference type="PROSITE" id="PS01183">
    <property type="entry name" value="UBIE_1"/>
    <property type="match status" value="1"/>
</dbReference>
<dbReference type="PROSITE" id="PS01184">
    <property type="entry name" value="UBIE_2"/>
    <property type="match status" value="1"/>
</dbReference>
<organism>
    <name type="scientific">Shigella dysenteriae serotype 1 (strain Sd197)</name>
    <dbReference type="NCBI Taxonomy" id="300267"/>
    <lineage>
        <taxon>Bacteria</taxon>
        <taxon>Pseudomonadati</taxon>
        <taxon>Pseudomonadota</taxon>
        <taxon>Gammaproteobacteria</taxon>
        <taxon>Enterobacterales</taxon>
        <taxon>Enterobacteriaceae</taxon>
        <taxon>Shigella</taxon>
    </lineage>
</organism>
<keyword id="KW-0474">Menaquinone biosynthesis</keyword>
<keyword id="KW-0489">Methyltransferase</keyword>
<keyword id="KW-1185">Reference proteome</keyword>
<keyword id="KW-0949">S-adenosyl-L-methionine</keyword>
<keyword id="KW-0808">Transferase</keyword>
<keyword id="KW-0831">Ubiquinone biosynthesis</keyword>
<comment type="function">
    <text evidence="1">Methyltransferase required for the conversion of demethylmenaquinol (DMKH2) to menaquinol (MKH2) and the conversion of 2-polyprenyl-6-methoxy-1,4-benzoquinol (DDMQH2) to 2-polyprenyl-3-methyl-6-methoxy-1,4-benzoquinol (DMQH2).</text>
</comment>
<comment type="catalytic activity">
    <reaction evidence="1">
        <text>a 2-demethylmenaquinol + S-adenosyl-L-methionine = a menaquinol + S-adenosyl-L-homocysteine + H(+)</text>
        <dbReference type="Rhea" id="RHEA:42640"/>
        <dbReference type="Rhea" id="RHEA-COMP:9539"/>
        <dbReference type="Rhea" id="RHEA-COMP:9563"/>
        <dbReference type="ChEBI" id="CHEBI:15378"/>
        <dbReference type="ChEBI" id="CHEBI:18151"/>
        <dbReference type="ChEBI" id="CHEBI:55437"/>
        <dbReference type="ChEBI" id="CHEBI:57856"/>
        <dbReference type="ChEBI" id="CHEBI:59789"/>
        <dbReference type="EC" id="2.1.1.163"/>
    </reaction>
</comment>
<comment type="catalytic activity">
    <reaction evidence="1">
        <text>a 2-methoxy-6-(all-trans-polyprenyl)benzene-1,4-diol + S-adenosyl-L-methionine = a 5-methoxy-2-methyl-3-(all-trans-polyprenyl)benzene-1,4-diol + S-adenosyl-L-homocysteine + H(+)</text>
        <dbReference type="Rhea" id="RHEA:28286"/>
        <dbReference type="Rhea" id="RHEA-COMP:10858"/>
        <dbReference type="Rhea" id="RHEA-COMP:10859"/>
        <dbReference type="ChEBI" id="CHEBI:15378"/>
        <dbReference type="ChEBI" id="CHEBI:57856"/>
        <dbReference type="ChEBI" id="CHEBI:59789"/>
        <dbReference type="ChEBI" id="CHEBI:84166"/>
        <dbReference type="ChEBI" id="CHEBI:84167"/>
        <dbReference type="EC" id="2.1.1.201"/>
    </reaction>
</comment>
<comment type="pathway">
    <text evidence="1">Quinol/quinone metabolism; menaquinone biosynthesis; menaquinol from 1,4-dihydroxy-2-naphthoate: step 2/2.</text>
</comment>
<comment type="pathway">
    <text evidence="1">Cofactor biosynthesis; ubiquinone biosynthesis.</text>
</comment>
<comment type="similarity">
    <text evidence="1">Belongs to the class I-like SAM-binding methyltransferase superfamily. MenG/UbiE family.</text>
</comment>
<name>UBIE_SHIDS</name>
<accession>Q32A11</accession>
<reference key="1">
    <citation type="journal article" date="2005" name="Nucleic Acids Res.">
        <title>Genome dynamics and diversity of Shigella species, the etiologic agents of bacillary dysentery.</title>
        <authorList>
            <person name="Yang F."/>
            <person name="Yang J."/>
            <person name="Zhang X."/>
            <person name="Chen L."/>
            <person name="Jiang Y."/>
            <person name="Yan Y."/>
            <person name="Tang X."/>
            <person name="Wang J."/>
            <person name="Xiong Z."/>
            <person name="Dong J."/>
            <person name="Xue Y."/>
            <person name="Zhu Y."/>
            <person name="Xu X."/>
            <person name="Sun L."/>
            <person name="Chen S."/>
            <person name="Nie H."/>
            <person name="Peng J."/>
            <person name="Xu J."/>
            <person name="Wang Y."/>
            <person name="Yuan Z."/>
            <person name="Wen Y."/>
            <person name="Yao Z."/>
            <person name="Shen Y."/>
            <person name="Qiang B."/>
            <person name="Hou Y."/>
            <person name="Yu J."/>
            <person name="Jin Q."/>
        </authorList>
    </citation>
    <scope>NUCLEOTIDE SEQUENCE [LARGE SCALE GENOMIC DNA]</scope>
    <source>
        <strain>Sd197</strain>
    </source>
</reference>
<feature type="chain" id="PRO_1000056304" description="Ubiquinone/menaquinone biosynthesis C-methyltransferase UbiE">
    <location>
        <begin position="1"/>
        <end position="251"/>
    </location>
</feature>
<feature type="binding site" evidence="1">
    <location>
        <position position="74"/>
    </location>
    <ligand>
        <name>S-adenosyl-L-methionine</name>
        <dbReference type="ChEBI" id="CHEBI:59789"/>
    </ligand>
</feature>
<feature type="binding site" evidence="1">
    <location>
        <position position="95"/>
    </location>
    <ligand>
        <name>S-adenosyl-L-methionine</name>
        <dbReference type="ChEBI" id="CHEBI:59789"/>
    </ligand>
</feature>
<feature type="binding site" evidence="1">
    <location>
        <begin position="123"/>
        <end position="124"/>
    </location>
    <ligand>
        <name>S-adenosyl-L-methionine</name>
        <dbReference type="ChEBI" id="CHEBI:59789"/>
    </ligand>
</feature>
<feature type="binding site" evidence="1">
    <location>
        <position position="140"/>
    </location>
    <ligand>
        <name>S-adenosyl-L-methionine</name>
        <dbReference type="ChEBI" id="CHEBI:59789"/>
    </ligand>
</feature>
<evidence type="ECO:0000255" key="1">
    <source>
        <dbReference type="HAMAP-Rule" id="MF_01813"/>
    </source>
</evidence>
<gene>
    <name evidence="1" type="primary">ubiE</name>
    <name type="ordered locus">SDY_3910</name>
</gene>
<proteinExistence type="inferred from homology"/>